<sequence length="169" mass="19602">MSTAQVPYLNCIRNTLTASMCLQNFGSQIVERHNKPEVEVKTSKELVLNPVIIARNKNERVLIETSINSIRISVSIKKSDEVDVILAKKFVRFLQQRAENFIILRRKPVEGYDISFLVTNFHTENMFKHKLVDFIIQFMEDIDREISDLKLTLNARGRIVASEYLKNFA</sequence>
<name>ARPC4_DICDI</name>
<accession>O96625</accession>
<accession>Q55CR7</accession>
<reference key="1">
    <citation type="journal article" date="2001" name="Cell Motil. Cytoskeleton">
        <title>Dynamics of the Dictyostelium Arp2/3 complex in endocytosis, cytokinesis, and chemotaxis.</title>
        <authorList>
            <person name="Insall R."/>
            <person name="Mueller-Taubenberger A."/>
            <person name="Machesky L."/>
            <person name="Koehler J."/>
            <person name="Simmeth E."/>
            <person name="Atkinson S.J."/>
            <person name="Weber I."/>
            <person name="Gerisch G."/>
        </authorList>
    </citation>
    <scope>NUCLEOTIDE SEQUENCE [MRNA]</scope>
    <scope>FUNCTION</scope>
    <scope>SUBCELLULAR LOCATION</scope>
    <source>
        <strain>AX2</strain>
    </source>
</reference>
<reference key="2">
    <citation type="journal article" date="2005" name="Nature">
        <title>The genome of the social amoeba Dictyostelium discoideum.</title>
        <authorList>
            <person name="Eichinger L."/>
            <person name="Pachebat J.A."/>
            <person name="Gloeckner G."/>
            <person name="Rajandream M.A."/>
            <person name="Sucgang R."/>
            <person name="Berriman M."/>
            <person name="Song J."/>
            <person name="Olsen R."/>
            <person name="Szafranski K."/>
            <person name="Xu Q."/>
            <person name="Tunggal B."/>
            <person name="Kummerfeld S."/>
            <person name="Madera M."/>
            <person name="Konfortov B.A."/>
            <person name="Rivero F."/>
            <person name="Bankier A.T."/>
            <person name="Lehmann R."/>
            <person name="Hamlin N."/>
            <person name="Davies R."/>
            <person name="Gaudet P."/>
            <person name="Fey P."/>
            <person name="Pilcher K."/>
            <person name="Chen G."/>
            <person name="Saunders D."/>
            <person name="Sodergren E.J."/>
            <person name="Davis P."/>
            <person name="Kerhornou A."/>
            <person name="Nie X."/>
            <person name="Hall N."/>
            <person name="Anjard C."/>
            <person name="Hemphill L."/>
            <person name="Bason N."/>
            <person name="Farbrother P."/>
            <person name="Desany B."/>
            <person name="Just E."/>
            <person name="Morio T."/>
            <person name="Rost R."/>
            <person name="Churcher C.M."/>
            <person name="Cooper J."/>
            <person name="Haydock S."/>
            <person name="van Driessche N."/>
            <person name="Cronin A."/>
            <person name="Goodhead I."/>
            <person name="Muzny D.M."/>
            <person name="Mourier T."/>
            <person name="Pain A."/>
            <person name="Lu M."/>
            <person name="Harper D."/>
            <person name="Lindsay R."/>
            <person name="Hauser H."/>
            <person name="James K.D."/>
            <person name="Quiles M."/>
            <person name="Madan Babu M."/>
            <person name="Saito T."/>
            <person name="Buchrieser C."/>
            <person name="Wardroper A."/>
            <person name="Felder M."/>
            <person name="Thangavelu M."/>
            <person name="Johnson D."/>
            <person name="Knights A."/>
            <person name="Loulseged H."/>
            <person name="Mungall K.L."/>
            <person name="Oliver K."/>
            <person name="Price C."/>
            <person name="Quail M.A."/>
            <person name="Urushihara H."/>
            <person name="Hernandez J."/>
            <person name="Rabbinowitsch E."/>
            <person name="Steffen D."/>
            <person name="Sanders M."/>
            <person name="Ma J."/>
            <person name="Kohara Y."/>
            <person name="Sharp S."/>
            <person name="Simmonds M.N."/>
            <person name="Spiegler S."/>
            <person name="Tivey A."/>
            <person name="Sugano S."/>
            <person name="White B."/>
            <person name="Walker D."/>
            <person name="Woodward J.R."/>
            <person name="Winckler T."/>
            <person name="Tanaka Y."/>
            <person name="Shaulsky G."/>
            <person name="Schleicher M."/>
            <person name="Weinstock G.M."/>
            <person name="Rosenthal A."/>
            <person name="Cox E.C."/>
            <person name="Chisholm R.L."/>
            <person name="Gibbs R.A."/>
            <person name="Loomis W.F."/>
            <person name="Platzer M."/>
            <person name="Kay R.R."/>
            <person name="Williams J.G."/>
            <person name="Dear P.H."/>
            <person name="Noegel A.A."/>
            <person name="Barrell B.G."/>
            <person name="Kuspa A."/>
        </authorList>
    </citation>
    <scope>NUCLEOTIDE SEQUENCE [LARGE SCALE GENOMIC DNA]</scope>
    <source>
        <strain>AX4</strain>
    </source>
</reference>
<reference key="3">
    <citation type="journal article" date="2001" name="J. Cell Biol.">
        <title>The Dictyostelium CARMIL protein links capping protein and the Arp2/3 complex to type I myosins through their SH3 domains.</title>
        <authorList>
            <person name="Jung G."/>
            <person name="Remmert K."/>
            <person name="Wu X."/>
            <person name="Volosky J.M."/>
            <person name="Hammer J.A. III"/>
        </authorList>
    </citation>
    <scope>PROTEIN SEQUENCE OF 45-55</scope>
    <scope>SUBCELLULAR LOCATION</scope>
    <scope>SUBUNIT</scope>
</reference>
<reference key="4">
    <citation type="journal article" date="2007" name="Protein Expr. Purif.">
        <title>Vectors for expression of proteins with single or combinatorial fluorescent protein and tandem affinity purification tags in Dictyostelium.</title>
        <authorList>
            <person name="Meima M.E."/>
            <person name="Weening K.E."/>
            <person name="Schaap P."/>
        </authorList>
    </citation>
    <scope>IDENTIFICATION IN THE ARP2/3 COMPLEX</scope>
    <scope>IDENTIFICATION BY MASS SPECTROMETRY</scope>
</reference>
<dbReference type="EMBL" id="AF095933">
    <property type="protein sequence ID" value="AAC99780.1"/>
    <property type="molecule type" value="mRNA"/>
</dbReference>
<dbReference type="EMBL" id="AAFI02000005">
    <property type="protein sequence ID" value="EAL71900.1"/>
    <property type="molecule type" value="Genomic_DNA"/>
</dbReference>
<dbReference type="RefSeq" id="XP_646414.1">
    <property type="nucleotide sequence ID" value="XM_641322.1"/>
</dbReference>
<dbReference type="SMR" id="O96625"/>
<dbReference type="FunCoup" id="O96625">
    <property type="interactions" value="695"/>
</dbReference>
<dbReference type="STRING" id="44689.O96625"/>
<dbReference type="PaxDb" id="44689-DDB0191121"/>
<dbReference type="EnsemblProtists" id="EAL71900">
    <property type="protein sequence ID" value="EAL71900"/>
    <property type="gene ID" value="DDB_G0269102"/>
</dbReference>
<dbReference type="GeneID" id="8617371"/>
<dbReference type="KEGG" id="ddi:DDB_G0269102"/>
<dbReference type="dictyBase" id="DDB_G0269102">
    <property type="gene designation" value="arcD"/>
</dbReference>
<dbReference type="VEuPathDB" id="AmoebaDB:DDB_G0269102"/>
<dbReference type="eggNOG" id="KOG1876">
    <property type="taxonomic scope" value="Eukaryota"/>
</dbReference>
<dbReference type="HOGENOM" id="CLU_084855_1_0_1"/>
<dbReference type="InParanoid" id="O96625"/>
<dbReference type="OMA" id="EAYLGEF"/>
<dbReference type="PhylomeDB" id="O96625"/>
<dbReference type="Reactome" id="R-DDI-2029482">
    <property type="pathway name" value="Regulation of actin dynamics for phagocytic cup formation"/>
</dbReference>
<dbReference type="Reactome" id="R-DDI-5663213">
    <property type="pathway name" value="RHO GTPases Activate WASPs and WAVEs"/>
</dbReference>
<dbReference type="PRO" id="PR:O96625"/>
<dbReference type="Proteomes" id="UP000002195">
    <property type="component" value="Chromosome 1"/>
</dbReference>
<dbReference type="GO" id="GO:0005885">
    <property type="term" value="C:Arp2/3 protein complex"/>
    <property type="evidence" value="ECO:0000314"/>
    <property type="project" value="dictyBase"/>
</dbReference>
<dbReference type="GO" id="GO:0005938">
    <property type="term" value="C:cell cortex"/>
    <property type="evidence" value="ECO:0007669"/>
    <property type="project" value="UniProtKB-SubCell"/>
</dbReference>
<dbReference type="GO" id="GO:0005829">
    <property type="term" value="C:cytosol"/>
    <property type="evidence" value="ECO:0007669"/>
    <property type="project" value="UniProtKB-SubCell"/>
</dbReference>
<dbReference type="GO" id="GO:0140220">
    <property type="term" value="C:pathogen-containing vacuole"/>
    <property type="evidence" value="ECO:0000314"/>
    <property type="project" value="dictyBase"/>
</dbReference>
<dbReference type="GO" id="GO:0031143">
    <property type="term" value="C:pseudopodium"/>
    <property type="evidence" value="ECO:0007669"/>
    <property type="project" value="UniProtKB-SubCell"/>
</dbReference>
<dbReference type="GO" id="GO:0051015">
    <property type="term" value="F:actin filament binding"/>
    <property type="evidence" value="ECO:0000318"/>
    <property type="project" value="GO_Central"/>
</dbReference>
<dbReference type="GO" id="GO:0030041">
    <property type="term" value="P:actin filament polymerization"/>
    <property type="evidence" value="ECO:0000304"/>
    <property type="project" value="dictyBase"/>
</dbReference>
<dbReference type="GO" id="GO:0045010">
    <property type="term" value="P:actin nucleation"/>
    <property type="evidence" value="ECO:0000304"/>
    <property type="project" value="dictyBase"/>
</dbReference>
<dbReference type="GO" id="GO:0034314">
    <property type="term" value="P:Arp2/3 complex-mediated actin nucleation"/>
    <property type="evidence" value="ECO:0000318"/>
    <property type="project" value="GO_Central"/>
</dbReference>
<dbReference type="GO" id="GO:0006887">
    <property type="term" value="P:exocytosis"/>
    <property type="evidence" value="ECO:0000270"/>
    <property type="project" value="dictyBase"/>
</dbReference>
<dbReference type="GO" id="GO:0006909">
    <property type="term" value="P:phagocytosis"/>
    <property type="evidence" value="ECO:0000270"/>
    <property type="project" value="dictyBase"/>
</dbReference>
<dbReference type="FunFam" id="3.30.1460.20:FF:000001">
    <property type="entry name" value="Actin-related protein 2/3 complex subunit 4"/>
    <property type="match status" value="1"/>
</dbReference>
<dbReference type="Gene3D" id="3.30.1460.20">
    <property type="match status" value="1"/>
</dbReference>
<dbReference type="InterPro" id="IPR034666">
    <property type="entry name" value="ARPC2/4"/>
</dbReference>
<dbReference type="InterPro" id="IPR008384">
    <property type="entry name" value="ARPC4"/>
</dbReference>
<dbReference type="PANTHER" id="PTHR22629:SF0">
    <property type="entry name" value="ACTIN-RELATED PROTEIN 2_3 COMPLEX SUBUNIT 4"/>
    <property type="match status" value="1"/>
</dbReference>
<dbReference type="PANTHER" id="PTHR22629">
    <property type="entry name" value="ARP2/3 COMPLEX 20 KD SUBUNIT"/>
    <property type="match status" value="1"/>
</dbReference>
<dbReference type="Pfam" id="PF05856">
    <property type="entry name" value="ARPC4"/>
    <property type="match status" value="1"/>
</dbReference>
<dbReference type="PIRSF" id="PIRSF039100">
    <property type="entry name" value="ARPC4"/>
    <property type="match status" value="1"/>
</dbReference>
<dbReference type="SUPFAM" id="SSF69645">
    <property type="entry name" value="Arp2/3 complex subunits"/>
    <property type="match status" value="1"/>
</dbReference>
<gene>
    <name type="primary">arcD</name>
    <name type="synonym">Arc19</name>
    <name type="synonym">arpG</name>
    <name type="ORF">DDB_G0269102</name>
</gene>
<keyword id="KW-0009">Actin-binding</keyword>
<keyword id="KW-0966">Cell projection</keyword>
<keyword id="KW-0963">Cytoplasm</keyword>
<keyword id="KW-0206">Cytoskeleton</keyword>
<keyword id="KW-0903">Direct protein sequencing</keyword>
<keyword id="KW-1185">Reference proteome</keyword>
<evidence type="ECO:0000269" key="1">
    <source>
    </source>
</evidence>
<evidence type="ECO:0000269" key="2">
    <source>
    </source>
</evidence>
<evidence type="ECO:0000269" key="3">
    <source>
    </source>
</evidence>
<evidence type="ECO:0000305" key="4"/>
<proteinExistence type="evidence at protein level"/>
<comment type="function">
    <text evidence="2">Functions as a component of the Arp2/3 complex which is involved in regulation of actin polymerization and together with an activating nucleation-promoting factor (NPF) mediates the formation of branched actin networks. Seems to contact the pointed end of the daughter actin filament. The Arp2/3 complex is involved in organizing the actin system in cell motility and chemotaxis, in phagocytosis and macropinocytosis, at late steps of endosome processing, and in mitosis. In concert with a group of other proteins, the Arp2/3 complex plays a general role in the rapid activation and adaptation of the actin system to its multiple functions.</text>
</comment>
<comment type="subunit">
    <text evidence="1 3">Component of the Arp2/3 complex composed of arpB/Arp2, arpC/Arp3, arcA/p41-arc, arcB/p34-arc, arcC/p21-arc, arcD/p20-arc and arcE/p16-arc. Interacts with carmil (via the region between the LRR domain and COOH-terminal proline-rich domain); carmil is required for Arp2/3-dependent actin nucleation. Arp2/3 complex, MyoB, MyoC, and the alpha and beta subunits of capping protein all form a larger complex with carmil.</text>
</comment>
<comment type="subcellular location">
    <subcellularLocation>
        <location>Cytoplasm</location>
        <location>Cytoskeleton</location>
    </subcellularLocation>
    <subcellularLocation>
        <location>Cytoplasm</location>
        <location>Cytosol</location>
    </subcellularLocation>
    <subcellularLocation>
        <location>Cytoplasm</location>
        <location>Cell cortex</location>
    </subcellularLocation>
    <subcellularLocation>
        <location>Cell projection</location>
        <location>Pseudopodium</location>
    </subcellularLocation>
</comment>
<comment type="similarity">
    <text evidence="4">Belongs to the ARPC4 family.</text>
</comment>
<protein>
    <recommendedName>
        <fullName>Actin-related protein 2/3 complex subunit 4</fullName>
    </recommendedName>
    <alternativeName>
        <fullName>Arp2/3 complex 20 kDa subunit</fullName>
        <shortName>p20-ARC</shortName>
    </alternativeName>
</protein>
<feature type="chain" id="PRO_0000327636" description="Actin-related protein 2/3 complex subunit 4">
    <location>
        <begin position="1"/>
        <end position="169"/>
    </location>
</feature>
<organism>
    <name type="scientific">Dictyostelium discoideum</name>
    <name type="common">Social amoeba</name>
    <dbReference type="NCBI Taxonomy" id="44689"/>
    <lineage>
        <taxon>Eukaryota</taxon>
        <taxon>Amoebozoa</taxon>
        <taxon>Evosea</taxon>
        <taxon>Eumycetozoa</taxon>
        <taxon>Dictyostelia</taxon>
        <taxon>Dictyosteliales</taxon>
        <taxon>Dictyosteliaceae</taxon>
        <taxon>Dictyostelium</taxon>
    </lineage>
</organism>